<proteinExistence type="inferred from homology"/>
<keyword id="KW-0012">Acyltransferase</keyword>
<keyword id="KW-0133">Cell shape</keyword>
<keyword id="KW-0961">Cell wall biogenesis/degradation</keyword>
<keyword id="KW-0963">Cytoplasm</keyword>
<keyword id="KW-0460">Magnesium</keyword>
<keyword id="KW-0479">Metal-binding</keyword>
<keyword id="KW-0511">Multifunctional enzyme</keyword>
<keyword id="KW-0548">Nucleotidyltransferase</keyword>
<keyword id="KW-0573">Peptidoglycan synthesis</keyword>
<keyword id="KW-0677">Repeat</keyword>
<keyword id="KW-0808">Transferase</keyword>
<protein>
    <recommendedName>
        <fullName evidence="1">Bifunctional protein GlmU</fullName>
    </recommendedName>
    <domain>
        <recommendedName>
            <fullName evidence="1">UDP-N-acetylglucosamine pyrophosphorylase</fullName>
            <ecNumber evidence="1">2.7.7.23</ecNumber>
        </recommendedName>
        <alternativeName>
            <fullName evidence="1">N-acetylglucosamine-1-phosphate uridyltransferase</fullName>
        </alternativeName>
    </domain>
    <domain>
        <recommendedName>
            <fullName evidence="1">Glucosamine-1-phosphate N-acetyltransferase</fullName>
            <ecNumber evidence="1">2.3.1.157</ecNumber>
        </recommendedName>
    </domain>
</protein>
<comment type="function">
    <text evidence="1">Catalyzes the last two sequential reactions in the de novo biosynthetic pathway for UDP-N-acetylglucosamine (UDP-GlcNAc). The C-terminal domain catalyzes the transfer of acetyl group from acetyl coenzyme A to glucosamine-1-phosphate (GlcN-1-P) to produce N-acetylglucosamine-1-phosphate (GlcNAc-1-P), which is converted into UDP-GlcNAc by the transfer of uridine 5-monophosphate (from uridine 5-triphosphate), a reaction catalyzed by the N-terminal domain.</text>
</comment>
<comment type="catalytic activity">
    <reaction evidence="1">
        <text>alpha-D-glucosamine 1-phosphate + acetyl-CoA = N-acetyl-alpha-D-glucosamine 1-phosphate + CoA + H(+)</text>
        <dbReference type="Rhea" id="RHEA:13725"/>
        <dbReference type="ChEBI" id="CHEBI:15378"/>
        <dbReference type="ChEBI" id="CHEBI:57287"/>
        <dbReference type="ChEBI" id="CHEBI:57288"/>
        <dbReference type="ChEBI" id="CHEBI:57776"/>
        <dbReference type="ChEBI" id="CHEBI:58516"/>
        <dbReference type="EC" id="2.3.1.157"/>
    </reaction>
</comment>
<comment type="catalytic activity">
    <reaction evidence="1">
        <text>N-acetyl-alpha-D-glucosamine 1-phosphate + UTP + H(+) = UDP-N-acetyl-alpha-D-glucosamine + diphosphate</text>
        <dbReference type="Rhea" id="RHEA:13509"/>
        <dbReference type="ChEBI" id="CHEBI:15378"/>
        <dbReference type="ChEBI" id="CHEBI:33019"/>
        <dbReference type="ChEBI" id="CHEBI:46398"/>
        <dbReference type="ChEBI" id="CHEBI:57705"/>
        <dbReference type="ChEBI" id="CHEBI:57776"/>
        <dbReference type="EC" id="2.7.7.23"/>
    </reaction>
</comment>
<comment type="cofactor">
    <cofactor evidence="1">
        <name>Mg(2+)</name>
        <dbReference type="ChEBI" id="CHEBI:18420"/>
    </cofactor>
    <text evidence="1">Binds 1 Mg(2+) ion per subunit.</text>
</comment>
<comment type="pathway">
    <text evidence="1">Nucleotide-sugar biosynthesis; UDP-N-acetyl-alpha-D-glucosamine biosynthesis; N-acetyl-alpha-D-glucosamine 1-phosphate from alpha-D-glucosamine 6-phosphate (route II): step 2/2.</text>
</comment>
<comment type="pathway">
    <text evidence="1">Nucleotide-sugar biosynthesis; UDP-N-acetyl-alpha-D-glucosamine biosynthesis; UDP-N-acetyl-alpha-D-glucosamine from N-acetyl-alpha-D-glucosamine 1-phosphate: step 1/1.</text>
</comment>
<comment type="pathway">
    <text evidence="1">Bacterial outer membrane biogenesis; LPS lipid A biosynthesis.</text>
</comment>
<comment type="subunit">
    <text evidence="1">Homotrimer.</text>
</comment>
<comment type="subcellular location">
    <subcellularLocation>
        <location evidence="1">Cytoplasm</location>
    </subcellularLocation>
</comment>
<comment type="similarity">
    <text evidence="1">In the N-terminal section; belongs to the N-acetylglucosamine-1-phosphate uridyltransferase family.</text>
</comment>
<comment type="similarity">
    <text evidence="1">In the C-terminal section; belongs to the transferase hexapeptide repeat family.</text>
</comment>
<accession>C5BF42</accession>
<reference key="1">
    <citation type="submission" date="2009-03" db="EMBL/GenBank/DDBJ databases">
        <title>Complete genome sequence of Edwardsiella ictaluri 93-146.</title>
        <authorList>
            <person name="Williams M.L."/>
            <person name="Gillaspy A.F."/>
            <person name="Dyer D.W."/>
            <person name="Thune R.L."/>
            <person name="Waldbieser G.C."/>
            <person name="Schuster S.C."/>
            <person name="Gipson J."/>
            <person name="Zaitshik J."/>
            <person name="Landry C."/>
            <person name="Lawrence M.L."/>
        </authorList>
    </citation>
    <scope>NUCLEOTIDE SEQUENCE [LARGE SCALE GENOMIC DNA]</scope>
    <source>
        <strain>93-146</strain>
    </source>
</reference>
<name>GLMU_EDWI9</name>
<evidence type="ECO:0000255" key="1">
    <source>
        <dbReference type="HAMAP-Rule" id="MF_01631"/>
    </source>
</evidence>
<dbReference type="EC" id="2.7.7.23" evidence="1"/>
<dbReference type="EC" id="2.3.1.157" evidence="1"/>
<dbReference type="EMBL" id="CP001600">
    <property type="protein sequence ID" value="ACR71025.1"/>
    <property type="molecule type" value="Genomic_DNA"/>
</dbReference>
<dbReference type="RefSeq" id="WP_015873052.1">
    <property type="nucleotide sequence ID" value="NZ_CP169062.1"/>
</dbReference>
<dbReference type="SMR" id="C5BF42"/>
<dbReference type="STRING" id="67780.B6E78_11095"/>
<dbReference type="GeneID" id="69540730"/>
<dbReference type="KEGG" id="eic:NT01EI_3914"/>
<dbReference type="PATRIC" id="fig|634503.3.peg.3485"/>
<dbReference type="HOGENOM" id="CLU_029499_15_2_6"/>
<dbReference type="OrthoDB" id="9775031at2"/>
<dbReference type="UniPathway" id="UPA00113">
    <property type="reaction ID" value="UER00532"/>
</dbReference>
<dbReference type="UniPathway" id="UPA00113">
    <property type="reaction ID" value="UER00533"/>
</dbReference>
<dbReference type="UniPathway" id="UPA00973"/>
<dbReference type="Proteomes" id="UP000001485">
    <property type="component" value="Chromosome"/>
</dbReference>
<dbReference type="GO" id="GO:0005737">
    <property type="term" value="C:cytoplasm"/>
    <property type="evidence" value="ECO:0007669"/>
    <property type="project" value="UniProtKB-SubCell"/>
</dbReference>
<dbReference type="GO" id="GO:0016020">
    <property type="term" value="C:membrane"/>
    <property type="evidence" value="ECO:0007669"/>
    <property type="project" value="GOC"/>
</dbReference>
<dbReference type="GO" id="GO:0019134">
    <property type="term" value="F:glucosamine-1-phosphate N-acetyltransferase activity"/>
    <property type="evidence" value="ECO:0007669"/>
    <property type="project" value="UniProtKB-UniRule"/>
</dbReference>
<dbReference type="GO" id="GO:0000287">
    <property type="term" value="F:magnesium ion binding"/>
    <property type="evidence" value="ECO:0007669"/>
    <property type="project" value="UniProtKB-UniRule"/>
</dbReference>
<dbReference type="GO" id="GO:0003977">
    <property type="term" value="F:UDP-N-acetylglucosamine diphosphorylase activity"/>
    <property type="evidence" value="ECO:0007669"/>
    <property type="project" value="UniProtKB-UniRule"/>
</dbReference>
<dbReference type="GO" id="GO:0000902">
    <property type="term" value="P:cell morphogenesis"/>
    <property type="evidence" value="ECO:0007669"/>
    <property type="project" value="UniProtKB-UniRule"/>
</dbReference>
<dbReference type="GO" id="GO:0071555">
    <property type="term" value="P:cell wall organization"/>
    <property type="evidence" value="ECO:0007669"/>
    <property type="project" value="UniProtKB-KW"/>
</dbReference>
<dbReference type="GO" id="GO:0009245">
    <property type="term" value="P:lipid A biosynthetic process"/>
    <property type="evidence" value="ECO:0007669"/>
    <property type="project" value="UniProtKB-UniRule"/>
</dbReference>
<dbReference type="GO" id="GO:0009252">
    <property type="term" value="P:peptidoglycan biosynthetic process"/>
    <property type="evidence" value="ECO:0007669"/>
    <property type="project" value="UniProtKB-UniRule"/>
</dbReference>
<dbReference type="GO" id="GO:0008360">
    <property type="term" value="P:regulation of cell shape"/>
    <property type="evidence" value="ECO:0007669"/>
    <property type="project" value="UniProtKB-KW"/>
</dbReference>
<dbReference type="GO" id="GO:0006048">
    <property type="term" value="P:UDP-N-acetylglucosamine biosynthetic process"/>
    <property type="evidence" value="ECO:0007669"/>
    <property type="project" value="UniProtKB-UniPathway"/>
</dbReference>
<dbReference type="CDD" id="cd02540">
    <property type="entry name" value="GT2_GlmU_N_bac"/>
    <property type="match status" value="1"/>
</dbReference>
<dbReference type="CDD" id="cd03353">
    <property type="entry name" value="LbH_GlmU_C"/>
    <property type="match status" value="1"/>
</dbReference>
<dbReference type="FunFam" id="3.90.550.10:FF:000006">
    <property type="entry name" value="Bifunctional protein GlmU"/>
    <property type="match status" value="1"/>
</dbReference>
<dbReference type="Gene3D" id="2.160.10.10">
    <property type="entry name" value="Hexapeptide repeat proteins"/>
    <property type="match status" value="1"/>
</dbReference>
<dbReference type="Gene3D" id="3.90.550.10">
    <property type="entry name" value="Spore Coat Polysaccharide Biosynthesis Protein SpsA, Chain A"/>
    <property type="match status" value="1"/>
</dbReference>
<dbReference type="HAMAP" id="MF_01631">
    <property type="entry name" value="GlmU"/>
    <property type="match status" value="1"/>
</dbReference>
<dbReference type="InterPro" id="IPR005882">
    <property type="entry name" value="Bifunctional_GlmU"/>
</dbReference>
<dbReference type="InterPro" id="IPR050065">
    <property type="entry name" value="GlmU-like"/>
</dbReference>
<dbReference type="InterPro" id="IPR038009">
    <property type="entry name" value="GlmU_C_LbH"/>
</dbReference>
<dbReference type="InterPro" id="IPR001451">
    <property type="entry name" value="Hexapep"/>
</dbReference>
<dbReference type="InterPro" id="IPR018357">
    <property type="entry name" value="Hexapep_transf_CS"/>
</dbReference>
<dbReference type="InterPro" id="IPR025877">
    <property type="entry name" value="MobA-like_NTP_Trfase"/>
</dbReference>
<dbReference type="InterPro" id="IPR029044">
    <property type="entry name" value="Nucleotide-diphossugar_trans"/>
</dbReference>
<dbReference type="InterPro" id="IPR011004">
    <property type="entry name" value="Trimer_LpxA-like_sf"/>
</dbReference>
<dbReference type="NCBIfam" id="TIGR01173">
    <property type="entry name" value="glmU"/>
    <property type="match status" value="1"/>
</dbReference>
<dbReference type="NCBIfam" id="NF006986">
    <property type="entry name" value="PRK09451.1"/>
    <property type="match status" value="1"/>
</dbReference>
<dbReference type="PANTHER" id="PTHR43584:SF3">
    <property type="entry name" value="BIFUNCTIONAL PROTEIN GLMU"/>
    <property type="match status" value="1"/>
</dbReference>
<dbReference type="PANTHER" id="PTHR43584">
    <property type="entry name" value="NUCLEOTIDYL TRANSFERASE"/>
    <property type="match status" value="1"/>
</dbReference>
<dbReference type="Pfam" id="PF00132">
    <property type="entry name" value="Hexapep"/>
    <property type="match status" value="2"/>
</dbReference>
<dbReference type="Pfam" id="PF12804">
    <property type="entry name" value="NTP_transf_3"/>
    <property type="match status" value="1"/>
</dbReference>
<dbReference type="SUPFAM" id="SSF53448">
    <property type="entry name" value="Nucleotide-diphospho-sugar transferases"/>
    <property type="match status" value="1"/>
</dbReference>
<dbReference type="SUPFAM" id="SSF51161">
    <property type="entry name" value="Trimeric LpxA-like enzymes"/>
    <property type="match status" value="1"/>
</dbReference>
<dbReference type="PROSITE" id="PS00101">
    <property type="entry name" value="HEXAPEP_TRANSFERASES"/>
    <property type="match status" value="1"/>
</dbReference>
<sequence>MSTSPLSVVILAAGKGTRMYSDLPKVLHPLAGKPMVQHVIDSALTLGARQVHLVYGHGGDLLKAHLSGQPLNWVLQAQQLGTGHAMQQAAPDFSDDEDILMLYGDVPLISAATLQRLIAAKPQGGIGLLTVKLDDPSGYGRIVRHHDRVVGIVEHKDASEAQRRINEINTGILVANGVDLKRWLARLDNNNAQGEFYITDIIAMAHQEGRQIAAVHPERLSEVEGVNNRLQLSALERAYQQQQAQRLLLAGVMLTDPARFDLRGELVHGRDVVIDTNVIIEGKVTLGNRVHIGSGCVLKDCQIADDSVISPYTVIEGARLAQACTVGPFARLRPGACLDAEAHVGNFVEMKKAHLGRGSKAGHLSYLGDAEIGAGVNIGAGTITCNYDGANKHQTVIGDDVFVGSDSQLVAPVTVGRGATIAAGTTVTKNVGDGELVLSRVKQVQLSGWERPVKKK</sequence>
<organism>
    <name type="scientific">Edwardsiella ictaluri (strain 93-146)</name>
    <dbReference type="NCBI Taxonomy" id="634503"/>
    <lineage>
        <taxon>Bacteria</taxon>
        <taxon>Pseudomonadati</taxon>
        <taxon>Pseudomonadota</taxon>
        <taxon>Gammaproteobacteria</taxon>
        <taxon>Enterobacterales</taxon>
        <taxon>Hafniaceae</taxon>
        <taxon>Edwardsiella</taxon>
    </lineage>
</organism>
<gene>
    <name evidence="1" type="primary">glmU</name>
    <name type="ordered locus">NT01EI_3914</name>
</gene>
<feature type="chain" id="PRO_1000215772" description="Bifunctional protein GlmU">
    <location>
        <begin position="1"/>
        <end position="456"/>
    </location>
</feature>
<feature type="region of interest" description="Pyrophosphorylase" evidence="1">
    <location>
        <begin position="1"/>
        <end position="229"/>
    </location>
</feature>
<feature type="region of interest" description="Linker" evidence="1">
    <location>
        <begin position="230"/>
        <end position="250"/>
    </location>
</feature>
<feature type="region of interest" description="N-acetyltransferase" evidence="1">
    <location>
        <begin position="251"/>
        <end position="456"/>
    </location>
</feature>
<feature type="active site" description="Proton acceptor" evidence="1">
    <location>
        <position position="363"/>
    </location>
</feature>
<feature type="binding site" evidence="1">
    <location>
        <begin position="11"/>
        <end position="14"/>
    </location>
    <ligand>
        <name>UDP-N-acetyl-alpha-D-glucosamine</name>
        <dbReference type="ChEBI" id="CHEBI:57705"/>
    </ligand>
</feature>
<feature type="binding site" evidence="1">
    <location>
        <position position="25"/>
    </location>
    <ligand>
        <name>UDP-N-acetyl-alpha-D-glucosamine</name>
        <dbReference type="ChEBI" id="CHEBI:57705"/>
    </ligand>
</feature>
<feature type="binding site" evidence="1">
    <location>
        <position position="76"/>
    </location>
    <ligand>
        <name>UDP-N-acetyl-alpha-D-glucosamine</name>
        <dbReference type="ChEBI" id="CHEBI:57705"/>
    </ligand>
</feature>
<feature type="binding site" evidence="1">
    <location>
        <begin position="81"/>
        <end position="82"/>
    </location>
    <ligand>
        <name>UDP-N-acetyl-alpha-D-glucosamine</name>
        <dbReference type="ChEBI" id="CHEBI:57705"/>
    </ligand>
</feature>
<feature type="binding site" evidence="1">
    <location>
        <begin position="103"/>
        <end position="105"/>
    </location>
    <ligand>
        <name>UDP-N-acetyl-alpha-D-glucosamine</name>
        <dbReference type="ChEBI" id="CHEBI:57705"/>
    </ligand>
</feature>
<feature type="binding site" evidence="1">
    <location>
        <position position="105"/>
    </location>
    <ligand>
        <name>Mg(2+)</name>
        <dbReference type="ChEBI" id="CHEBI:18420"/>
    </ligand>
</feature>
<feature type="binding site" evidence="1">
    <location>
        <position position="140"/>
    </location>
    <ligand>
        <name>UDP-N-acetyl-alpha-D-glucosamine</name>
        <dbReference type="ChEBI" id="CHEBI:57705"/>
    </ligand>
</feature>
<feature type="binding site" evidence="1">
    <location>
        <position position="154"/>
    </location>
    <ligand>
        <name>UDP-N-acetyl-alpha-D-glucosamine</name>
        <dbReference type="ChEBI" id="CHEBI:57705"/>
    </ligand>
</feature>
<feature type="binding site" evidence="1">
    <location>
        <position position="169"/>
    </location>
    <ligand>
        <name>UDP-N-acetyl-alpha-D-glucosamine</name>
        <dbReference type="ChEBI" id="CHEBI:57705"/>
    </ligand>
</feature>
<feature type="binding site" evidence="1">
    <location>
        <position position="227"/>
    </location>
    <ligand>
        <name>Mg(2+)</name>
        <dbReference type="ChEBI" id="CHEBI:18420"/>
    </ligand>
</feature>
<feature type="binding site" evidence="1">
    <location>
        <position position="227"/>
    </location>
    <ligand>
        <name>UDP-N-acetyl-alpha-D-glucosamine</name>
        <dbReference type="ChEBI" id="CHEBI:57705"/>
    </ligand>
</feature>
<feature type="binding site" evidence="1">
    <location>
        <position position="333"/>
    </location>
    <ligand>
        <name>UDP-N-acetyl-alpha-D-glucosamine</name>
        <dbReference type="ChEBI" id="CHEBI:57705"/>
    </ligand>
</feature>
<feature type="binding site" evidence="1">
    <location>
        <position position="351"/>
    </location>
    <ligand>
        <name>UDP-N-acetyl-alpha-D-glucosamine</name>
        <dbReference type="ChEBI" id="CHEBI:57705"/>
    </ligand>
</feature>
<feature type="binding site" evidence="1">
    <location>
        <position position="366"/>
    </location>
    <ligand>
        <name>UDP-N-acetyl-alpha-D-glucosamine</name>
        <dbReference type="ChEBI" id="CHEBI:57705"/>
    </ligand>
</feature>
<feature type="binding site" evidence="1">
    <location>
        <position position="377"/>
    </location>
    <ligand>
        <name>UDP-N-acetyl-alpha-D-glucosamine</name>
        <dbReference type="ChEBI" id="CHEBI:57705"/>
    </ligand>
</feature>
<feature type="binding site" evidence="1">
    <location>
        <position position="380"/>
    </location>
    <ligand>
        <name>acetyl-CoA</name>
        <dbReference type="ChEBI" id="CHEBI:57288"/>
    </ligand>
</feature>
<feature type="binding site" evidence="1">
    <location>
        <begin position="386"/>
        <end position="387"/>
    </location>
    <ligand>
        <name>acetyl-CoA</name>
        <dbReference type="ChEBI" id="CHEBI:57288"/>
    </ligand>
</feature>
<feature type="binding site" evidence="1">
    <location>
        <position position="405"/>
    </location>
    <ligand>
        <name>acetyl-CoA</name>
        <dbReference type="ChEBI" id="CHEBI:57288"/>
    </ligand>
</feature>
<feature type="binding site" evidence="1">
    <location>
        <position position="423"/>
    </location>
    <ligand>
        <name>acetyl-CoA</name>
        <dbReference type="ChEBI" id="CHEBI:57288"/>
    </ligand>
</feature>
<feature type="binding site" evidence="1">
    <location>
        <position position="440"/>
    </location>
    <ligand>
        <name>acetyl-CoA</name>
        <dbReference type="ChEBI" id="CHEBI:57288"/>
    </ligand>
</feature>